<gene>
    <name type="ORF">CG2061</name>
</gene>
<protein>
    <recommendedName>
        <fullName>LanC-like protein 3 homolog</fullName>
    </recommendedName>
</protein>
<organism>
    <name type="scientific">Drosophila melanogaster</name>
    <name type="common">Fruit fly</name>
    <dbReference type="NCBI Taxonomy" id="7227"/>
    <lineage>
        <taxon>Eukaryota</taxon>
        <taxon>Metazoa</taxon>
        <taxon>Ecdysozoa</taxon>
        <taxon>Arthropoda</taxon>
        <taxon>Hexapoda</taxon>
        <taxon>Insecta</taxon>
        <taxon>Pterygota</taxon>
        <taxon>Neoptera</taxon>
        <taxon>Endopterygota</taxon>
        <taxon>Diptera</taxon>
        <taxon>Brachycera</taxon>
        <taxon>Muscomorpha</taxon>
        <taxon>Ephydroidea</taxon>
        <taxon>Drosophilidae</taxon>
        <taxon>Drosophila</taxon>
        <taxon>Sophophora</taxon>
    </lineage>
</organism>
<evidence type="ECO:0000305" key="1"/>
<name>LANC3_DROME</name>
<proteinExistence type="evidence at transcript level"/>
<reference key="1">
    <citation type="journal article" date="2000" name="Science">
        <title>The genome sequence of Drosophila melanogaster.</title>
        <authorList>
            <person name="Adams M.D."/>
            <person name="Celniker S.E."/>
            <person name="Holt R.A."/>
            <person name="Evans C.A."/>
            <person name="Gocayne J.D."/>
            <person name="Amanatides P.G."/>
            <person name="Scherer S.E."/>
            <person name="Li P.W."/>
            <person name="Hoskins R.A."/>
            <person name="Galle R.F."/>
            <person name="George R.A."/>
            <person name="Lewis S.E."/>
            <person name="Richards S."/>
            <person name="Ashburner M."/>
            <person name="Henderson S.N."/>
            <person name="Sutton G.G."/>
            <person name="Wortman J.R."/>
            <person name="Yandell M.D."/>
            <person name="Zhang Q."/>
            <person name="Chen L.X."/>
            <person name="Brandon R.C."/>
            <person name="Rogers Y.-H.C."/>
            <person name="Blazej R.G."/>
            <person name="Champe M."/>
            <person name="Pfeiffer B.D."/>
            <person name="Wan K.H."/>
            <person name="Doyle C."/>
            <person name="Baxter E.G."/>
            <person name="Helt G."/>
            <person name="Nelson C.R."/>
            <person name="Miklos G.L.G."/>
            <person name="Abril J.F."/>
            <person name="Agbayani A."/>
            <person name="An H.-J."/>
            <person name="Andrews-Pfannkoch C."/>
            <person name="Baldwin D."/>
            <person name="Ballew R.M."/>
            <person name="Basu A."/>
            <person name="Baxendale J."/>
            <person name="Bayraktaroglu L."/>
            <person name="Beasley E.M."/>
            <person name="Beeson K.Y."/>
            <person name="Benos P.V."/>
            <person name="Berman B.P."/>
            <person name="Bhandari D."/>
            <person name="Bolshakov S."/>
            <person name="Borkova D."/>
            <person name="Botchan M.R."/>
            <person name="Bouck J."/>
            <person name="Brokstein P."/>
            <person name="Brottier P."/>
            <person name="Burtis K.C."/>
            <person name="Busam D.A."/>
            <person name="Butler H."/>
            <person name="Cadieu E."/>
            <person name="Center A."/>
            <person name="Chandra I."/>
            <person name="Cherry J.M."/>
            <person name="Cawley S."/>
            <person name="Dahlke C."/>
            <person name="Davenport L.B."/>
            <person name="Davies P."/>
            <person name="de Pablos B."/>
            <person name="Delcher A."/>
            <person name="Deng Z."/>
            <person name="Mays A.D."/>
            <person name="Dew I."/>
            <person name="Dietz S.M."/>
            <person name="Dodson K."/>
            <person name="Doup L.E."/>
            <person name="Downes M."/>
            <person name="Dugan-Rocha S."/>
            <person name="Dunkov B.C."/>
            <person name="Dunn P."/>
            <person name="Durbin K.J."/>
            <person name="Evangelista C.C."/>
            <person name="Ferraz C."/>
            <person name="Ferriera S."/>
            <person name="Fleischmann W."/>
            <person name="Fosler C."/>
            <person name="Gabrielian A.E."/>
            <person name="Garg N.S."/>
            <person name="Gelbart W.M."/>
            <person name="Glasser K."/>
            <person name="Glodek A."/>
            <person name="Gong F."/>
            <person name="Gorrell J.H."/>
            <person name="Gu Z."/>
            <person name="Guan P."/>
            <person name="Harris M."/>
            <person name="Harris N.L."/>
            <person name="Harvey D.A."/>
            <person name="Heiman T.J."/>
            <person name="Hernandez J.R."/>
            <person name="Houck J."/>
            <person name="Hostin D."/>
            <person name="Houston K.A."/>
            <person name="Howland T.J."/>
            <person name="Wei M.-H."/>
            <person name="Ibegwam C."/>
            <person name="Jalali M."/>
            <person name="Kalush F."/>
            <person name="Karpen G.H."/>
            <person name="Ke Z."/>
            <person name="Kennison J.A."/>
            <person name="Ketchum K.A."/>
            <person name="Kimmel B.E."/>
            <person name="Kodira C.D."/>
            <person name="Kraft C.L."/>
            <person name="Kravitz S."/>
            <person name="Kulp D."/>
            <person name="Lai Z."/>
            <person name="Lasko P."/>
            <person name="Lei Y."/>
            <person name="Levitsky A.A."/>
            <person name="Li J.H."/>
            <person name="Li Z."/>
            <person name="Liang Y."/>
            <person name="Lin X."/>
            <person name="Liu X."/>
            <person name="Mattei B."/>
            <person name="McIntosh T.C."/>
            <person name="McLeod M.P."/>
            <person name="McPherson D."/>
            <person name="Merkulov G."/>
            <person name="Milshina N.V."/>
            <person name="Mobarry C."/>
            <person name="Morris J."/>
            <person name="Moshrefi A."/>
            <person name="Mount S.M."/>
            <person name="Moy M."/>
            <person name="Murphy B."/>
            <person name="Murphy L."/>
            <person name="Muzny D.M."/>
            <person name="Nelson D.L."/>
            <person name="Nelson D.R."/>
            <person name="Nelson K.A."/>
            <person name="Nixon K."/>
            <person name="Nusskern D.R."/>
            <person name="Pacleb J.M."/>
            <person name="Palazzolo M."/>
            <person name="Pittman G.S."/>
            <person name="Pan S."/>
            <person name="Pollard J."/>
            <person name="Puri V."/>
            <person name="Reese M.G."/>
            <person name="Reinert K."/>
            <person name="Remington K."/>
            <person name="Saunders R.D.C."/>
            <person name="Scheeler F."/>
            <person name="Shen H."/>
            <person name="Shue B.C."/>
            <person name="Siden-Kiamos I."/>
            <person name="Simpson M."/>
            <person name="Skupski M.P."/>
            <person name="Smith T.J."/>
            <person name="Spier E."/>
            <person name="Spradling A.C."/>
            <person name="Stapleton M."/>
            <person name="Strong R."/>
            <person name="Sun E."/>
            <person name="Svirskas R."/>
            <person name="Tector C."/>
            <person name="Turner R."/>
            <person name="Venter E."/>
            <person name="Wang A.H."/>
            <person name="Wang X."/>
            <person name="Wang Z.-Y."/>
            <person name="Wassarman D.A."/>
            <person name="Weinstock G.M."/>
            <person name="Weissenbach J."/>
            <person name="Williams S.M."/>
            <person name="Woodage T."/>
            <person name="Worley K.C."/>
            <person name="Wu D."/>
            <person name="Yang S."/>
            <person name="Yao Q.A."/>
            <person name="Ye J."/>
            <person name="Yeh R.-F."/>
            <person name="Zaveri J.S."/>
            <person name="Zhan M."/>
            <person name="Zhang G."/>
            <person name="Zhao Q."/>
            <person name="Zheng L."/>
            <person name="Zheng X.H."/>
            <person name="Zhong F.N."/>
            <person name="Zhong W."/>
            <person name="Zhou X."/>
            <person name="Zhu S.C."/>
            <person name="Zhu X."/>
            <person name="Smith H.O."/>
            <person name="Gibbs R.A."/>
            <person name="Myers E.W."/>
            <person name="Rubin G.M."/>
            <person name="Venter J.C."/>
        </authorList>
    </citation>
    <scope>NUCLEOTIDE SEQUENCE [LARGE SCALE GENOMIC DNA]</scope>
    <source>
        <strain>Berkeley</strain>
    </source>
</reference>
<reference key="2">
    <citation type="journal article" date="2002" name="Genome Biol.">
        <title>Annotation of the Drosophila melanogaster euchromatic genome: a systematic review.</title>
        <authorList>
            <person name="Misra S."/>
            <person name="Crosby M.A."/>
            <person name="Mungall C.J."/>
            <person name="Matthews B.B."/>
            <person name="Campbell K.S."/>
            <person name="Hradecky P."/>
            <person name="Huang Y."/>
            <person name="Kaminker J.S."/>
            <person name="Millburn G.H."/>
            <person name="Prochnik S.E."/>
            <person name="Smith C.D."/>
            <person name="Tupy J.L."/>
            <person name="Whitfield E.J."/>
            <person name="Bayraktaroglu L."/>
            <person name="Berman B.P."/>
            <person name="Bettencourt B.R."/>
            <person name="Celniker S.E."/>
            <person name="de Grey A.D.N.J."/>
            <person name="Drysdale R.A."/>
            <person name="Harris N.L."/>
            <person name="Richter J."/>
            <person name="Russo S."/>
            <person name="Schroeder A.J."/>
            <person name="Shu S.Q."/>
            <person name="Stapleton M."/>
            <person name="Yamada C."/>
            <person name="Ashburner M."/>
            <person name="Gelbart W.M."/>
            <person name="Rubin G.M."/>
            <person name="Lewis S.E."/>
        </authorList>
    </citation>
    <scope>GENOME REANNOTATION</scope>
    <source>
        <strain>Berkeley</strain>
    </source>
</reference>
<reference key="3">
    <citation type="journal article" date="2002" name="Genome Biol.">
        <title>A Drosophila full-length cDNA resource.</title>
        <authorList>
            <person name="Stapleton M."/>
            <person name="Carlson J.W."/>
            <person name="Brokstein P."/>
            <person name="Yu C."/>
            <person name="Champe M."/>
            <person name="George R.A."/>
            <person name="Guarin H."/>
            <person name="Kronmiller B."/>
            <person name="Pacleb J.M."/>
            <person name="Park S."/>
            <person name="Wan K.H."/>
            <person name="Rubin G.M."/>
            <person name="Celniker S.E."/>
        </authorList>
    </citation>
    <scope>NUCLEOTIDE SEQUENCE [LARGE SCALE MRNA]</scope>
    <source>
        <strain>Berkeley</strain>
        <tissue>Embryo</tissue>
    </source>
</reference>
<accession>Q9Y0Y7</accession>
<accession>A4V498</accession>
<feature type="chain" id="PRO_0000285253" description="LanC-like protein 3 homolog">
    <location>
        <begin position="1"/>
        <end position="419"/>
    </location>
</feature>
<comment type="similarity">
    <text evidence="1">Belongs to the LanC-like protein family.</text>
</comment>
<sequence length="419" mass="47610">MERRYLKNPFPDFAGGENTPFASDEEHIKNLICTYVDAILEHCHPNSDDEDNRGDLYVGNAGIAFMFWKLNSCEQTRDLYPALDHAASFIRNAKVNANRYKKRSAERYSFLCGNAGIYAVSAAISQALKETEELSDDLANFKSGIPCSKEFMHTKYGCDEVLVGRAGYLSGCYWLNDVLPEKKITDDDLVSICQLIVTSGREYSKQNNSPCPLMYQYHGTEYLGAAHGLCAILHMLLDSPWFRTLPISAPAAELRDIKRSIDFFLELQDSDGNFPVALEDLRSGRDKRLVHWCHGAPGAVYVLAKAYLIFKEEKYLASLRRCADMVWKKGFLRKGPGICHGVAGNGYVFLLLFRLTNEMRYLYRAHKFMELLTNAEFKLRARTPDRPHSLYEGVAGTVCYLVDLLEPEQAYFPFMDVFH</sequence>
<keyword id="KW-1185">Reference proteome</keyword>
<dbReference type="EMBL" id="AE014298">
    <property type="protein sequence ID" value="AAF47995.1"/>
    <property type="molecule type" value="Genomic_DNA"/>
</dbReference>
<dbReference type="EMBL" id="AE014298">
    <property type="protein sequence ID" value="AAN09280.1"/>
    <property type="molecule type" value="Genomic_DNA"/>
</dbReference>
<dbReference type="EMBL" id="AF145689">
    <property type="protein sequence ID" value="AAD38664.1"/>
    <property type="molecule type" value="mRNA"/>
</dbReference>
<dbReference type="RefSeq" id="NP_001259437.1">
    <property type="nucleotide sequence ID" value="NM_001272508.1"/>
</dbReference>
<dbReference type="RefSeq" id="NP_572682.1">
    <property type="nucleotide sequence ID" value="NM_132454.5"/>
</dbReference>
<dbReference type="RefSeq" id="NP_727485.1">
    <property type="nucleotide sequence ID" value="NM_167264.2"/>
</dbReference>
<dbReference type="SMR" id="Q9Y0Y7"/>
<dbReference type="BioGRID" id="58457">
    <property type="interactions" value="7"/>
</dbReference>
<dbReference type="FunCoup" id="Q9Y0Y7">
    <property type="interactions" value="212"/>
</dbReference>
<dbReference type="IntAct" id="Q9Y0Y7">
    <property type="interactions" value="4"/>
</dbReference>
<dbReference type="PaxDb" id="7227-FBpp0073286"/>
<dbReference type="DNASU" id="32042"/>
<dbReference type="EnsemblMetazoa" id="FBtr0073429">
    <property type="protein sequence ID" value="FBpp0073285"/>
    <property type="gene ID" value="FBgn0027498"/>
</dbReference>
<dbReference type="EnsemblMetazoa" id="FBtr0073431">
    <property type="protein sequence ID" value="FBpp0073287"/>
    <property type="gene ID" value="FBgn0027498"/>
</dbReference>
<dbReference type="EnsemblMetazoa" id="FBtr0332383">
    <property type="protein sequence ID" value="FBpp0304657"/>
    <property type="gene ID" value="FBgn0027498"/>
</dbReference>
<dbReference type="GeneID" id="32042"/>
<dbReference type="KEGG" id="dme:Dmel_CG2061"/>
<dbReference type="UCSC" id="CG2061-RA">
    <property type="organism name" value="d. melanogaster"/>
</dbReference>
<dbReference type="AGR" id="FB:FBgn0027498"/>
<dbReference type="FlyBase" id="FBgn0027498">
    <property type="gene designation" value="CG2061"/>
</dbReference>
<dbReference type="VEuPathDB" id="VectorBase:FBgn0027498"/>
<dbReference type="eggNOG" id="KOG2787">
    <property type="taxonomic scope" value="Eukaryota"/>
</dbReference>
<dbReference type="GeneTree" id="ENSGT00530000063186"/>
<dbReference type="HOGENOM" id="CLU_036244_0_1_1"/>
<dbReference type="InParanoid" id="Q9Y0Y7"/>
<dbReference type="OMA" id="GTSAIMH"/>
<dbReference type="OrthoDB" id="10257263at2759"/>
<dbReference type="PhylomeDB" id="Q9Y0Y7"/>
<dbReference type="BioGRID-ORCS" id="32042">
    <property type="hits" value="0 hits in 3 CRISPR screens"/>
</dbReference>
<dbReference type="GenomeRNAi" id="32042"/>
<dbReference type="PRO" id="PR:Q9Y0Y7"/>
<dbReference type="Proteomes" id="UP000000803">
    <property type="component" value="Chromosome X"/>
</dbReference>
<dbReference type="Bgee" id="FBgn0027498">
    <property type="expression patterns" value="Expressed in secondary oocyte and 21 other cell types or tissues"/>
</dbReference>
<dbReference type="ExpressionAtlas" id="Q9Y0Y7">
    <property type="expression patterns" value="differential"/>
</dbReference>
<dbReference type="GO" id="GO:0005886">
    <property type="term" value="C:plasma membrane"/>
    <property type="evidence" value="ECO:0000318"/>
    <property type="project" value="GO_Central"/>
</dbReference>
<dbReference type="GO" id="GO:0005975">
    <property type="term" value="P:carbohydrate metabolic process"/>
    <property type="evidence" value="ECO:0007669"/>
    <property type="project" value="InterPro"/>
</dbReference>
<dbReference type="GO" id="GO:0031179">
    <property type="term" value="P:peptide modification"/>
    <property type="evidence" value="ECO:0007669"/>
    <property type="project" value="InterPro"/>
</dbReference>
<dbReference type="CDD" id="cd04794">
    <property type="entry name" value="euk_LANCL"/>
    <property type="match status" value="1"/>
</dbReference>
<dbReference type="FunFam" id="1.50.10.10:FF:000012">
    <property type="entry name" value="LanC-like protein 3"/>
    <property type="match status" value="1"/>
</dbReference>
<dbReference type="Gene3D" id="1.50.10.10">
    <property type="match status" value="1"/>
</dbReference>
<dbReference type="InterPro" id="IPR012341">
    <property type="entry name" value="6hp_glycosidase-like_sf"/>
</dbReference>
<dbReference type="InterPro" id="IPR007822">
    <property type="entry name" value="LANC-like"/>
</dbReference>
<dbReference type="InterPro" id="IPR020464">
    <property type="entry name" value="LanC-like_prot_euk"/>
</dbReference>
<dbReference type="PANTHER" id="PTHR12736">
    <property type="entry name" value="LANC-LIKE PROTEIN"/>
    <property type="match status" value="1"/>
</dbReference>
<dbReference type="PANTHER" id="PTHR12736:SF7">
    <property type="entry name" value="LANC-LIKE PROTEIN 3"/>
    <property type="match status" value="1"/>
</dbReference>
<dbReference type="Pfam" id="PF05147">
    <property type="entry name" value="LANC_like"/>
    <property type="match status" value="1"/>
</dbReference>
<dbReference type="PRINTS" id="PR01951">
    <property type="entry name" value="LANCEUKARYTE"/>
</dbReference>
<dbReference type="PRINTS" id="PR01950">
    <property type="entry name" value="LANCSUPER"/>
</dbReference>
<dbReference type="SMART" id="SM01260">
    <property type="entry name" value="LANC_like"/>
    <property type="match status" value="1"/>
</dbReference>
<dbReference type="SUPFAM" id="SSF158745">
    <property type="entry name" value="LanC-like"/>
    <property type="match status" value="1"/>
</dbReference>